<keyword id="KW-0997">Cell inner membrane</keyword>
<keyword id="KW-1003">Cell membrane</keyword>
<keyword id="KW-0472">Membrane</keyword>
<keyword id="KW-0520">NAD</keyword>
<keyword id="KW-0874">Quinone</keyword>
<keyword id="KW-1185">Reference proteome</keyword>
<keyword id="KW-1278">Translocase</keyword>
<keyword id="KW-0812">Transmembrane</keyword>
<keyword id="KW-1133">Transmembrane helix</keyword>
<keyword id="KW-0830">Ubiquinone</keyword>
<evidence type="ECO:0000255" key="1">
    <source>
        <dbReference type="HAMAP-Rule" id="MF_01350"/>
    </source>
</evidence>
<feature type="chain" id="PRO_0000244902" description="NADH-quinone oxidoreductase subunit H">
    <location>
        <begin position="1"/>
        <end position="347"/>
    </location>
</feature>
<feature type="transmembrane region" description="Helical" evidence="1">
    <location>
        <begin position="13"/>
        <end position="33"/>
    </location>
</feature>
<feature type="transmembrane region" description="Helical" evidence="1">
    <location>
        <begin position="50"/>
        <end position="70"/>
    </location>
</feature>
<feature type="transmembrane region" description="Helical" evidence="1">
    <location>
        <begin position="82"/>
        <end position="102"/>
    </location>
</feature>
<feature type="transmembrane region" description="Helical" evidence="1">
    <location>
        <begin position="115"/>
        <end position="135"/>
    </location>
</feature>
<feature type="transmembrane region" description="Helical" evidence="1">
    <location>
        <begin position="161"/>
        <end position="181"/>
    </location>
</feature>
<feature type="transmembrane region" description="Helical" evidence="1">
    <location>
        <begin position="198"/>
        <end position="218"/>
    </location>
</feature>
<feature type="transmembrane region" description="Helical" evidence="1">
    <location>
        <begin position="248"/>
        <end position="268"/>
    </location>
</feature>
<feature type="transmembrane region" description="Helical" evidence="1">
    <location>
        <begin position="286"/>
        <end position="306"/>
    </location>
</feature>
<feature type="transmembrane region" description="Helical" evidence="1">
    <location>
        <begin position="325"/>
        <end position="345"/>
    </location>
</feature>
<protein>
    <recommendedName>
        <fullName evidence="1">NADH-quinone oxidoreductase subunit H</fullName>
        <ecNumber evidence="1">7.1.1.-</ecNumber>
    </recommendedName>
    <alternativeName>
        <fullName evidence="1">NADH dehydrogenase I subunit H</fullName>
    </alternativeName>
    <alternativeName>
        <fullName evidence="1">NDH-1 subunit H</fullName>
    </alternativeName>
</protein>
<proteinExistence type="inferred from homology"/>
<organism>
    <name type="scientific">Brucella abortus (strain 2308)</name>
    <dbReference type="NCBI Taxonomy" id="359391"/>
    <lineage>
        <taxon>Bacteria</taxon>
        <taxon>Pseudomonadati</taxon>
        <taxon>Pseudomonadota</taxon>
        <taxon>Alphaproteobacteria</taxon>
        <taxon>Hyphomicrobiales</taxon>
        <taxon>Brucellaceae</taxon>
        <taxon>Brucella/Ochrobactrum group</taxon>
        <taxon>Brucella</taxon>
    </lineage>
</organism>
<comment type="function">
    <text evidence="1">NDH-1 shuttles electrons from NADH, via FMN and iron-sulfur (Fe-S) centers, to quinones in the respiratory chain. The immediate electron acceptor for the enzyme in this species is believed to be ubiquinone. Couples the redox reaction to proton translocation (for every two electrons transferred, four hydrogen ions are translocated across the cytoplasmic membrane), and thus conserves the redox energy in a proton gradient. This subunit may bind ubiquinone.</text>
</comment>
<comment type="catalytic activity">
    <reaction evidence="1">
        <text>a quinone + NADH + 5 H(+)(in) = a quinol + NAD(+) + 4 H(+)(out)</text>
        <dbReference type="Rhea" id="RHEA:57888"/>
        <dbReference type="ChEBI" id="CHEBI:15378"/>
        <dbReference type="ChEBI" id="CHEBI:24646"/>
        <dbReference type="ChEBI" id="CHEBI:57540"/>
        <dbReference type="ChEBI" id="CHEBI:57945"/>
        <dbReference type="ChEBI" id="CHEBI:132124"/>
    </reaction>
</comment>
<comment type="subunit">
    <text evidence="1">NDH-1 is composed of 14 different subunits. Subunits NuoA, H, J, K, L, M, N constitute the membrane sector of the complex.</text>
</comment>
<comment type="subcellular location">
    <subcellularLocation>
        <location evidence="1">Cell inner membrane</location>
        <topology evidence="1">Multi-pass membrane protein</topology>
    </subcellularLocation>
</comment>
<comment type="similarity">
    <text evidence="1">Belongs to the complex I subunit 1 family.</text>
</comment>
<accession>Q2YNF6</accession>
<gene>
    <name evidence="1" type="primary">nuoH</name>
    <name type="ordered locus">BAB1_0829</name>
</gene>
<sequence>MEGIFAAYVLPALIIALKSVVLLVVLLIVVAYLLYADRKIWAAVQLRRGPNVVGPWGLFQAFADLLKFVFKEPIIPSGANKGVFLLAPFISAVLAMATWAVIPVNEGWAVANINVGILYIFAISSLEVYGVIMGGWASNSKYPFLGALRSAAQMVSYEVSIGFVIVTVLLTVGSLNLTDIVLSQNTGLGTMLGLPASFLDWNWLCLFPMFVVFFISALAETNRPPFDLVEAESELVAGHMIEYSSTPFLLFFLGEYVAITLMCALMTVLFLGGWLPPVDVWFLSWVPGIIWFMLKLCFCFFLFAMVKAFVPRYRYDQLMRLGWKVFLPISLFMVVATATFLKVFGLA</sequence>
<reference key="1">
    <citation type="journal article" date="2005" name="Infect. Immun.">
        <title>Whole-genome analyses of speciation events in pathogenic Brucellae.</title>
        <authorList>
            <person name="Chain P.S."/>
            <person name="Comerci D.J."/>
            <person name="Tolmasky M.E."/>
            <person name="Larimer F.W."/>
            <person name="Malfatti S.A."/>
            <person name="Vergez L.M."/>
            <person name="Aguero F."/>
            <person name="Land M.L."/>
            <person name="Ugalde R.A."/>
            <person name="Garcia E."/>
        </authorList>
    </citation>
    <scope>NUCLEOTIDE SEQUENCE [LARGE SCALE GENOMIC DNA]</scope>
    <source>
        <strain>2308</strain>
    </source>
</reference>
<dbReference type="EC" id="7.1.1.-" evidence="1"/>
<dbReference type="EMBL" id="AM040264">
    <property type="protein sequence ID" value="CAJ10785.1"/>
    <property type="molecule type" value="Genomic_DNA"/>
</dbReference>
<dbReference type="RefSeq" id="WP_002963944.1">
    <property type="nucleotide sequence ID" value="NZ_KN046823.1"/>
</dbReference>
<dbReference type="SMR" id="Q2YNF6"/>
<dbReference type="STRING" id="359391.BAB1_0829"/>
<dbReference type="GeneID" id="97533884"/>
<dbReference type="KEGG" id="bmf:BAB1_0829"/>
<dbReference type="PATRIC" id="fig|359391.11.peg.3139"/>
<dbReference type="HOGENOM" id="CLU_015134_0_1_5"/>
<dbReference type="PhylomeDB" id="Q2YNF6"/>
<dbReference type="Proteomes" id="UP000002719">
    <property type="component" value="Chromosome I"/>
</dbReference>
<dbReference type="GO" id="GO:0005886">
    <property type="term" value="C:plasma membrane"/>
    <property type="evidence" value="ECO:0007669"/>
    <property type="project" value="UniProtKB-SubCell"/>
</dbReference>
<dbReference type="GO" id="GO:0003954">
    <property type="term" value="F:NADH dehydrogenase activity"/>
    <property type="evidence" value="ECO:0007669"/>
    <property type="project" value="TreeGrafter"/>
</dbReference>
<dbReference type="GO" id="GO:0016655">
    <property type="term" value="F:oxidoreductase activity, acting on NAD(P)H, quinone or similar compound as acceptor"/>
    <property type="evidence" value="ECO:0007669"/>
    <property type="project" value="UniProtKB-UniRule"/>
</dbReference>
<dbReference type="GO" id="GO:0048038">
    <property type="term" value="F:quinone binding"/>
    <property type="evidence" value="ECO:0007669"/>
    <property type="project" value="UniProtKB-KW"/>
</dbReference>
<dbReference type="GO" id="GO:0009060">
    <property type="term" value="P:aerobic respiration"/>
    <property type="evidence" value="ECO:0007669"/>
    <property type="project" value="TreeGrafter"/>
</dbReference>
<dbReference type="HAMAP" id="MF_01350">
    <property type="entry name" value="NDH1_NuoH"/>
    <property type="match status" value="1"/>
</dbReference>
<dbReference type="InterPro" id="IPR001694">
    <property type="entry name" value="NADH_UbQ_OxRdtase_su1/FPO"/>
</dbReference>
<dbReference type="InterPro" id="IPR018086">
    <property type="entry name" value="NADH_UbQ_OxRdtase_su1_CS"/>
</dbReference>
<dbReference type="NCBIfam" id="NF004741">
    <property type="entry name" value="PRK06076.1-2"/>
    <property type="match status" value="1"/>
</dbReference>
<dbReference type="NCBIfam" id="NF004745">
    <property type="entry name" value="PRK06076.1-6"/>
    <property type="match status" value="1"/>
</dbReference>
<dbReference type="PANTHER" id="PTHR11432">
    <property type="entry name" value="NADH DEHYDROGENASE SUBUNIT 1"/>
    <property type="match status" value="1"/>
</dbReference>
<dbReference type="PANTHER" id="PTHR11432:SF3">
    <property type="entry name" value="NADH-UBIQUINONE OXIDOREDUCTASE CHAIN 1"/>
    <property type="match status" value="1"/>
</dbReference>
<dbReference type="Pfam" id="PF00146">
    <property type="entry name" value="NADHdh"/>
    <property type="match status" value="1"/>
</dbReference>
<dbReference type="PROSITE" id="PS00668">
    <property type="entry name" value="COMPLEX1_ND1_2"/>
    <property type="match status" value="1"/>
</dbReference>
<name>NUOH_BRUA2</name>